<organism>
    <name type="scientific">Cryptococcus neoformans var. neoformans serotype D (strain B-3501A)</name>
    <name type="common">Filobasidiella neoformans</name>
    <dbReference type="NCBI Taxonomy" id="283643"/>
    <lineage>
        <taxon>Eukaryota</taxon>
        <taxon>Fungi</taxon>
        <taxon>Dikarya</taxon>
        <taxon>Basidiomycota</taxon>
        <taxon>Agaricomycotina</taxon>
        <taxon>Tremellomycetes</taxon>
        <taxon>Tremellales</taxon>
        <taxon>Cryptococcaceae</taxon>
        <taxon>Cryptococcus</taxon>
        <taxon>Cryptococcus neoformans species complex</taxon>
    </lineage>
</organism>
<proteinExistence type="inferred from homology"/>
<name>GWT1_CRYNB</name>
<dbReference type="EC" id="2.3.-.-"/>
<dbReference type="EMBL" id="AAEY01000042">
    <property type="protein sequence ID" value="EAL19212.1"/>
    <property type="molecule type" value="Genomic_DNA"/>
</dbReference>
<dbReference type="RefSeq" id="XP_773859.1">
    <property type="nucleotide sequence ID" value="XM_768766.1"/>
</dbReference>
<dbReference type="SMR" id="P0CP65"/>
<dbReference type="GlyCosmos" id="P0CP65">
    <property type="glycosylation" value="1 site, No reported glycans"/>
</dbReference>
<dbReference type="EnsemblFungi" id="AAW45325">
    <property type="protein sequence ID" value="AAW45325"/>
    <property type="gene ID" value="CNI03250"/>
</dbReference>
<dbReference type="GeneID" id="4937835"/>
<dbReference type="KEGG" id="cnb:CNBH3110"/>
<dbReference type="VEuPathDB" id="FungiDB:CNBH3110"/>
<dbReference type="HOGENOM" id="CLU_020802_1_0_1"/>
<dbReference type="OrthoDB" id="8088at5206"/>
<dbReference type="UniPathway" id="UPA00196"/>
<dbReference type="GO" id="GO:0005789">
    <property type="term" value="C:endoplasmic reticulum membrane"/>
    <property type="evidence" value="ECO:0007669"/>
    <property type="project" value="UniProtKB-SubCell"/>
</dbReference>
<dbReference type="GO" id="GO:0032216">
    <property type="term" value="F:glucosaminyl-phosphatidylinositol O-acyltransferase activity"/>
    <property type="evidence" value="ECO:0007669"/>
    <property type="project" value="TreeGrafter"/>
</dbReference>
<dbReference type="GO" id="GO:0006506">
    <property type="term" value="P:GPI anchor biosynthetic process"/>
    <property type="evidence" value="ECO:0007669"/>
    <property type="project" value="UniProtKB-UniPathway"/>
</dbReference>
<dbReference type="GO" id="GO:0072659">
    <property type="term" value="P:protein localization to plasma membrane"/>
    <property type="evidence" value="ECO:0007669"/>
    <property type="project" value="TreeGrafter"/>
</dbReference>
<dbReference type="InterPro" id="IPR009447">
    <property type="entry name" value="PIGW/GWT1"/>
</dbReference>
<dbReference type="PANTHER" id="PTHR20661">
    <property type="entry name" value="PHOSPHATIDYLINOSITOL-GLYCAN BIOSYNTHESIS CLASS W PROTEIN"/>
    <property type="match status" value="1"/>
</dbReference>
<dbReference type="PANTHER" id="PTHR20661:SF0">
    <property type="entry name" value="PHOSPHATIDYLINOSITOL-GLYCAN BIOSYNTHESIS CLASS W PROTEIN"/>
    <property type="match status" value="1"/>
</dbReference>
<dbReference type="Pfam" id="PF06423">
    <property type="entry name" value="GWT1"/>
    <property type="match status" value="2"/>
</dbReference>
<gene>
    <name type="primary">GWT1</name>
    <name type="ordered locus">CNBH3110</name>
</gene>
<protein>
    <recommendedName>
        <fullName>GPI-anchored wall transfer protein 1</fullName>
        <ecNumber>2.3.-.-</ecNumber>
    </recommendedName>
</protein>
<evidence type="ECO:0000250" key="1"/>
<evidence type="ECO:0000255" key="2"/>
<evidence type="ECO:0000256" key="3">
    <source>
        <dbReference type="SAM" id="MobiDB-lite"/>
    </source>
</evidence>
<evidence type="ECO:0000305" key="4"/>
<comment type="function">
    <text evidence="1">Probable acetyltransferase, which acetylates the inositol ring of phosphatidylinositol during biosynthesis of GPI-anchor.</text>
</comment>
<comment type="pathway">
    <text>Glycolipid biosynthesis; glycosylphosphatidylinositol-anchor biosynthesis.</text>
</comment>
<comment type="subcellular location">
    <subcellularLocation>
        <location evidence="1">Endoplasmic reticulum membrane</location>
        <topology evidence="1">Multi-pass membrane protein</topology>
    </subcellularLocation>
</comment>
<comment type="similarity">
    <text evidence="4">Belongs to the PIGW family.</text>
</comment>
<feature type="chain" id="PRO_0000410190" description="GPI-anchored wall transfer protein 1">
    <location>
        <begin position="1"/>
        <end position="598"/>
    </location>
</feature>
<feature type="transmembrane region" description="Helical" evidence="2">
    <location>
        <begin position="20"/>
        <end position="40"/>
    </location>
</feature>
<feature type="transmembrane region" description="Helical" evidence="2">
    <location>
        <begin position="43"/>
        <end position="63"/>
    </location>
</feature>
<feature type="transmembrane region" description="Helical" evidence="2">
    <location>
        <begin position="65"/>
        <end position="85"/>
    </location>
</feature>
<feature type="transmembrane region" description="Helical" evidence="2">
    <location>
        <begin position="223"/>
        <end position="243"/>
    </location>
</feature>
<feature type="transmembrane region" description="Helical" evidence="2">
    <location>
        <begin position="258"/>
        <end position="278"/>
    </location>
</feature>
<feature type="transmembrane region" description="Helical" evidence="2">
    <location>
        <begin position="307"/>
        <end position="327"/>
    </location>
</feature>
<feature type="transmembrane region" description="Helical" evidence="2">
    <location>
        <begin position="344"/>
        <end position="364"/>
    </location>
</feature>
<feature type="transmembrane region" description="Helical" evidence="2">
    <location>
        <begin position="377"/>
        <end position="397"/>
    </location>
</feature>
<feature type="transmembrane region" description="Helical" evidence="2">
    <location>
        <begin position="464"/>
        <end position="484"/>
    </location>
</feature>
<feature type="transmembrane region" description="Helical" evidence="2">
    <location>
        <begin position="500"/>
        <end position="520"/>
    </location>
</feature>
<feature type="transmembrane region" description="Helical" evidence="2">
    <location>
        <begin position="571"/>
        <end position="591"/>
    </location>
</feature>
<feature type="region of interest" description="Disordered" evidence="3">
    <location>
        <begin position="95"/>
        <end position="121"/>
    </location>
</feature>
<feature type="region of interest" description="Disordered" evidence="3">
    <location>
        <begin position="149"/>
        <end position="172"/>
    </location>
</feature>
<feature type="compositionally biased region" description="Acidic residues" evidence="3">
    <location>
        <begin position="107"/>
        <end position="116"/>
    </location>
</feature>
<feature type="compositionally biased region" description="Low complexity" evidence="3">
    <location>
        <begin position="152"/>
        <end position="162"/>
    </location>
</feature>
<feature type="glycosylation site" description="N-linked (GlcNAc...) asparagine" evidence="2">
    <location>
        <position position="560"/>
    </location>
</feature>
<accession>P0CP65</accession>
<accession>Q55MX3</accession>
<accession>Q5KBA2</accession>
<reference key="1">
    <citation type="journal article" date="2005" name="Science">
        <title>The genome of the basidiomycetous yeast and human pathogen Cryptococcus neoformans.</title>
        <authorList>
            <person name="Loftus B.J."/>
            <person name="Fung E."/>
            <person name="Roncaglia P."/>
            <person name="Rowley D."/>
            <person name="Amedeo P."/>
            <person name="Bruno D."/>
            <person name="Vamathevan J."/>
            <person name="Miranda M."/>
            <person name="Anderson I.J."/>
            <person name="Fraser J.A."/>
            <person name="Allen J.E."/>
            <person name="Bosdet I.E."/>
            <person name="Brent M.R."/>
            <person name="Chiu R."/>
            <person name="Doering T.L."/>
            <person name="Donlin M.J."/>
            <person name="D'Souza C.A."/>
            <person name="Fox D.S."/>
            <person name="Grinberg V."/>
            <person name="Fu J."/>
            <person name="Fukushima M."/>
            <person name="Haas B.J."/>
            <person name="Huang J.C."/>
            <person name="Janbon G."/>
            <person name="Jones S.J.M."/>
            <person name="Koo H.L."/>
            <person name="Krzywinski M.I."/>
            <person name="Kwon-Chung K.J."/>
            <person name="Lengeler K.B."/>
            <person name="Maiti R."/>
            <person name="Marra M.A."/>
            <person name="Marra R.E."/>
            <person name="Mathewson C.A."/>
            <person name="Mitchell T.G."/>
            <person name="Pertea M."/>
            <person name="Riggs F.R."/>
            <person name="Salzberg S.L."/>
            <person name="Schein J.E."/>
            <person name="Shvartsbeyn A."/>
            <person name="Shin H."/>
            <person name="Shumway M."/>
            <person name="Specht C.A."/>
            <person name="Suh B.B."/>
            <person name="Tenney A."/>
            <person name="Utterback T.R."/>
            <person name="Wickes B.L."/>
            <person name="Wortman J.R."/>
            <person name="Wye N.H."/>
            <person name="Kronstad J.W."/>
            <person name="Lodge J.K."/>
            <person name="Heitman J."/>
            <person name="Davis R.W."/>
            <person name="Fraser C.M."/>
            <person name="Hyman R.W."/>
        </authorList>
    </citation>
    <scope>NUCLEOTIDE SEQUENCE [LARGE SCALE GENOMIC DNA]</scope>
    <source>
        <strain>B-3501A</strain>
    </source>
</reference>
<keyword id="KW-0012">Acyltransferase</keyword>
<keyword id="KW-0256">Endoplasmic reticulum</keyword>
<keyword id="KW-0325">Glycoprotein</keyword>
<keyword id="KW-0337">GPI-anchor biosynthesis</keyword>
<keyword id="KW-0472">Membrane</keyword>
<keyword id="KW-0808">Transferase</keyword>
<keyword id="KW-0812">Transmembrane</keyword>
<keyword id="KW-1133">Transmembrane helix</keyword>
<sequence length="598" mass="65412">MGDYKLAKEAFVSGNPGASIWSINAVSLVALATYALWIALSPYIRHGLLNNYLICVLPLLLGVTIFSTSPLVFASFLSIISLFFIAKSQKRFNFPRSPEKPKGQWLDESDSDEEPAEPASAAGSAAVSPAKLLPSQVAFASGSLLSTDPTISPMSPSSSSSSGHEDPLGIMGVNRRRSPLEGVSLDVPSHIDSKVRISPVPSLRLKKSRATKVQGVEEKGRLPFLTVYRAHMMLMTVICILAVDFEVFPRWQGKCEDFGTSLMDVGVGSFVFSLGLVSTKSLSPPPPPPTPTSPALNSHIIPLTPSPLSFILISLRKSVPVLVLGFIRLIMVKGSDYPEHVTEYGVHWNFFFTLALVPVLAVGVRPLTQWLRWSVLGVIISLLHQLCLTYYLQPIIFSFGRSGIFLANKEGFSSLPGYLSIFLIGLSIGDHVLRLSLPPRRERVVSETIEEHEQSHFERKKLDLIMELIGYSLGWWALLGGWIWAGGEVSRRLANAPYVFWVAAYNTTFLLGYLLLTHIIPSSISSQTSPSILVPRLLDAMNKNGLAVFLAANLLTGLVNVSMETMYAPAWLSMGVLMLYSLAVSCVGWVLKGRSIKI</sequence>